<dbReference type="EC" id="1.15.1.1" evidence="1"/>
<dbReference type="EMBL" id="Z95892">
    <property type="protein sequence ID" value="CAB09345.1"/>
    <property type="molecule type" value="Genomic_DNA"/>
</dbReference>
<dbReference type="SMR" id="O33603"/>
<dbReference type="STRING" id="1326.BU200_03605"/>
<dbReference type="GO" id="GO:0005737">
    <property type="term" value="C:cytoplasm"/>
    <property type="evidence" value="ECO:0007669"/>
    <property type="project" value="TreeGrafter"/>
</dbReference>
<dbReference type="GO" id="GO:0046872">
    <property type="term" value="F:metal ion binding"/>
    <property type="evidence" value="ECO:0007669"/>
    <property type="project" value="UniProtKB-KW"/>
</dbReference>
<dbReference type="GO" id="GO:0004784">
    <property type="term" value="F:superoxide dismutase activity"/>
    <property type="evidence" value="ECO:0007669"/>
    <property type="project" value="UniProtKB-EC"/>
</dbReference>
<dbReference type="FunFam" id="1.10.287.990:FF:000001">
    <property type="entry name" value="Superoxide dismutase"/>
    <property type="match status" value="1"/>
</dbReference>
<dbReference type="Gene3D" id="1.10.287.990">
    <property type="entry name" value="Fe,Mn superoxide dismutase (SOD) domain"/>
    <property type="match status" value="1"/>
</dbReference>
<dbReference type="Gene3D" id="3.55.40.20">
    <property type="entry name" value="Iron/manganese superoxide dismutase, C-terminal domain"/>
    <property type="match status" value="1"/>
</dbReference>
<dbReference type="InterPro" id="IPR001189">
    <property type="entry name" value="Mn/Fe_SOD"/>
</dbReference>
<dbReference type="InterPro" id="IPR019832">
    <property type="entry name" value="Mn/Fe_SOD_C"/>
</dbReference>
<dbReference type="InterPro" id="IPR019831">
    <property type="entry name" value="Mn/Fe_SOD_N"/>
</dbReference>
<dbReference type="InterPro" id="IPR036324">
    <property type="entry name" value="Mn/Fe_SOD_N_sf"/>
</dbReference>
<dbReference type="InterPro" id="IPR036314">
    <property type="entry name" value="SOD_C_sf"/>
</dbReference>
<dbReference type="PANTHER" id="PTHR43595">
    <property type="entry name" value="37S RIBOSOMAL PROTEIN S26, MITOCHONDRIAL"/>
    <property type="match status" value="1"/>
</dbReference>
<dbReference type="PANTHER" id="PTHR43595:SF2">
    <property type="entry name" value="SMALL RIBOSOMAL SUBUNIT PROTEIN MS42"/>
    <property type="match status" value="1"/>
</dbReference>
<dbReference type="Pfam" id="PF02777">
    <property type="entry name" value="Sod_Fe_C"/>
    <property type="match status" value="1"/>
</dbReference>
<dbReference type="Pfam" id="PF00081">
    <property type="entry name" value="Sod_Fe_N"/>
    <property type="match status" value="1"/>
</dbReference>
<dbReference type="PRINTS" id="PR01703">
    <property type="entry name" value="MNSODISMTASE"/>
</dbReference>
<dbReference type="SUPFAM" id="SSF54719">
    <property type="entry name" value="Fe,Mn superoxide dismutase (SOD), C-terminal domain"/>
    <property type="match status" value="1"/>
</dbReference>
<dbReference type="SUPFAM" id="SSF46609">
    <property type="entry name" value="Fe,Mn superoxide dismutase (SOD), N-terminal domain"/>
    <property type="match status" value="1"/>
</dbReference>
<comment type="function">
    <text evidence="1">Destroys superoxide anion radicals which are normally produced within the cells and which are toxic to biological systems. Catalyzes the dismutation of superoxide anion radicals into O2 and H2O2 by successive reduction and oxidation of the transition metal ion at the active site.</text>
</comment>
<comment type="catalytic activity">
    <reaction evidence="1">
        <text>2 superoxide + 2 H(+) = H2O2 + O2</text>
        <dbReference type="Rhea" id="RHEA:20696"/>
        <dbReference type="ChEBI" id="CHEBI:15378"/>
        <dbReference type="ChEBI" id="CHEBI:15379"/>
        <dbReference type="ChEBI" id="CHEBI:16240"/>
        <dbReference type="ChEBI" id="CHEBI:18421"/>
        <dbReference type="EC" id="1.15.1.1"/>
    </reaction>
    <physiologicalReaction direction="left-to-right" evidence="1">
        <dbReference type="Rhea" id="RHEA:20697"/>
    </physiologicalReaction>
</comment>
<comment type="cofactor">
    <cofactor evidence="1">
        <name>Mn(2+)</name>
        <dbReference type="ChEBI" id="CHEBI:29035"/>
    </cofactor>
    <cofactor evidence="1">
        <name>Fe(3+)</name>
        <dbReference type="ChEBI" id="CHEBI:29034"/>
    </cofactor>
    <text evidence="1">Binds 1 Mn(2+) or Fe(3+) ion per subunit.</text>
</comment>
<comment type="similarity">
    <text evidence="2">Belongs to the iron/manganese superoxide dismutase family.</text>
</comment>
<keyword id="KW-0408">Iron</keyword>
<keyword id="KW-0464">Manganese</keyword>
<keyword id="KW-0479">Metal-binding</keyword>
<keyword id="KW-0560">Oxidoreductase</keyword>
<reference key="1">
    <citation type="journal article" date="1998" name="J. Clin. Microbiol.">
        <title>Identification of streptococci to species level by sequencing the gene encoding the manganese-dependent superoxide dismutase.</title>
        <authorList>
            <person name="Poyart C."/>
            <person name="Quesne G."/>
            <person name="Coulon S."/>
            <person name="Berche P."/>
            <person name="Trieu-Cuot P."/>
        </authorList>
    </citation>
    <scope>NUCLEOTIDE SEQUENCE [GENOMIC DNA]</scope>
    <source>
        <strain>ATCC 51725 / DSM 20622 / CCUG 27296 / CIP 82.4 / NCIMB 702025 / NCTC 12957 / NCDO 2025</strain>
    </source>
</reference>
<organism>
    <name type="scientific">Streptococcus acidominimus</name>
    <dbReference type="NCBI Taxonomy" id="1326"/>
    <lineage>
        <taxon>Bacteria</taxon>
        <taxon>Bacillati</taxon>
        <taxon>Bacillota</taxon>
        <taxon>Bacilli</taxon>
        <taxon>Lactobacillales</taxon>
        <taxon>Streptococcaceae</taxon>
        <taxon>Streptococcus</taxon>
    </lineage>
</organism>
<sequence length="145" mass="15668">HIDAETMTLHHDKHHATYVANANAALEKHPEIGEDLEALLSDVDALPADIRQALINNGGGHLNHALFWELLSPEKTEISAELAADIDETFGSFDAFKEAFTTAATTRFGSGWAFLVVNPKGKLEVISTANQDTPITQGLKPILAL</sequence>
<protein>
    <recommendedName>
        <fullName>Superoxide dismutase [Mn/Fe]</fullName>
        <ecNumber evidence="1">1.15.1.1</ecNumber>
    </recommendedName>
</protein>
<name>SODM_STRAI</name>
<evidence type="ECO:0000250" key="1">
    <source>
        <dbReference type="UniProtKB" id="P80293"/>
    </source>
</evidence>
<evidence type="ECO:0000305" key="2"/>
<gene>
    <name type="primary">sodA</name>
</gene>
<accession>O33603</accession>
<feature type="chain" id="PRO_0000160088" description="Superoxide dismutase [Mn/Fe]">
    <location>
        <begin position="1" status="less than"/>
        <end position="145" status="greater than"/>
    </location>
</feature>
<feature type="binding site" evidence="1">
    <location>
        <position position="10"/>
    </location>
    <ligand>
        <name>Fe(3+)</name>
        <dbReference type="ChEBI" id="CHEBI:29034"/>
    </ligand>
</feature>
<feature type="binding site" evidence="1">
    <location>
        <position position="10"/>
    </location>
    <ligand>
        <name>Mn(2+)</name>
        <dbReference type="ChEBI" id="CHEBI:29035"/>
    </ligand>
</feature>
<feature type="binding site" evidence="1">
    <location>
        <position position="64"/>
    </location>
    <ligand>
        <name>Fe(3+)</name>
        <dbReference type="ChEBI" id="CHEBI:29034"/>
    </ligand>
</feature>
<feature type="binding site" evidence="1">
    <location>
        <position position="64"/>
    </location>
    <ligand>
        <name>Mn(2+)</name>
        <dbReference type="ChEBI" id="CHEBI:29035"/>
    </ligand>
</feature>
<feature type="non-terminal residue">
    <location>
        <position position="1"/>
    </location>
</feature>
<feature type="non-terminal residue">
    <location>
        <position position="145"/>
    </location>
</feature>
<proteinExistence type="inferred from homology"/>